<reference key="1">
    <citation type="journal article" date="2001" name="Mol. Biol. Evol.">
        <title>Mechanisms for evolving hypervariability: the case of conopeptides.</title>
        <authorList>
            <person name="Conticello S.G."/>
            <person name="Gilad Y."/>
            <person name="Avidan N."/>
            <person name="Ben-Asher E."/>
            <person name="Levy Z."/>
            <person name="Fainzilber M."/>
        </authorList>
    </citation>
    <scope>NUCLEOTIDE SEQUENCE [MRNA]</scope>
    <source>
        <tissue>Venom duct</tissue>
    </source>
</reference>
<dbReference type="EMBL" id="AF215038">
    <property type="protein sequence ID" value="AAG60466.1"/>
    <property type="molecule type" value="mRNA"/>
</dbReference>
<dbReference type="EMBL" id="AF215106">
    <property type="protein sequence ID" value="AAG60527.1"/>
    <property type="molecule type" value="mRNA"/>
</dbReference>
<dbReference type="SMR" id="Q9BH84"/>
<dbReference type="ConoServer" id="725">
    <property type="toxin name" value="Ar6.2 precursor"/>
</dbReference>
<dbReference type="GO" id="GO:0005576">
    <property type="term" value="C:extracellular region"/>
    <property type="evidence" value="ECO:0007669"/>
    <property type="project" value="UniProtKB-SubCell"/>
</dbReference>
<dbReference type="GO" id="GO:0044231">
    <property type="term" value="C:host cell presynaptic membrane"/>
    <property type="evidence" value="ECO:0007669"/>
    <property type="project" value="UniProtKB-KW"/>
</dbReference>
<dbReference type="GO" id="GO:0005246">
    <property type="term" value="F:calcium channel regulator activity"/>
    <property type="evidence" value="ECO:0007669"/>
    <property type="project" value="UniProtKB-KW"/>
</dbReference>
<dbReference type="GO" id="GO:0008200">
    <property type="term" value="F:ion channel inhibitor activity"/>
    <property type="evidence" value="ECO:0007669"/>
    <property type="project" value="InterPro"/>
</dbReference>
<dbReference type="GO" id="GO:0090729">
    <property type="term" value="F:toxin activity"/>
    <property type="evidence" value="ECO:0007669"/>
    <property type="project" value="UniProtKB-KW"/>
</dbReference>
<dbReference type="InterPro" id="IPR004214">
    <property type="entry name" value="Conotoxin"/>
</dbReference>
<dbReference type="InterPro" id="IPR012321">
    <property type="entry name" value="Conotoxin_omega-typ_CS"/>
</dbReference>
<dbReference type="Pfam" id="PF02950">
    <property type="entry name" value="Conotoxin"/>
    <property type="match status" value="1"/>
</dbReference>
<dbReference type="PROSITE" id="PS60004">
    <property type="entry name" value="OMEGA_CONOTOXIN"/>
    <property type="match status" value="1"/>
</dbReference>
<sequence>MKLTCMMIVAVLFLTAWTSVTAVNTRGELENLFLRASHEMNSEASKLDKKVCVDGGTFCGFPKIGGPCCSGWCIFVCL</sequence>
<evidence type="ECO:0000250" key="1"/>
<evidence type="ECO:0000250" key="2">
    <source>
        <dbReference type="UniProtKB" id="Q26443"/>
    </source>
</evidence>
<evidence type="ECO:0000255" key="3"/>
<evidence type="ECO:0000305" key="4"/>
<comment type="function">
    <text evidence="1">Omega-conotoxins act at presynaptic membranes, they bind and block voltage-gated calcium channels (Cav).</text>
</comment>
<comment type="subcellular location">
    <subcellularLocation>
        <location evidence="1">Secreted</location>
    </subcellularLocation>
</comment>
<comment type="tissue specificity">
    <text>Expressed by the venom duct.</text>
</comment>
<comment type="domain">
    <text evidence="1">The presence of a 'disulfide through disulfide knot' structurally defines this protein as a knottin.</text>
</comment>
<comment type="domain">
    <text>The cysteine framework is VI/VII (C-C-CC-C-C).</text>
</comment>
<comment type="similarity">
    <text evidence="4">Belongs to the conotoxin O1 superfamily.</text>
</comment>
<feature type="signal peptide" evidence="3">
    <location>
        <begin position="1"/>
        <end position="22"/>
    </location>
</feature>
<feature type="propeptide" id="PRO_0000404762" evidence="1">
    <location>
        <begin position="23"/>
        <end position="48"/>
    </location>
</feature>
<feature type="peptide" id="PRO_0000404763" description="Omega-conotoxin-like ArMKLT1-011">
    <location>
        <begin position="51"/>
        <end position="78"/>
    </location>
</feature>
<feature type="disulfide bond" evidence="2">
    <location>
        <begin position="52"/>
        <end position="69"/>
    </location>
</feature>
<feature type="disulfide bond" evidence="2">
    <location>
        <begin position="59"/>
        <end position="73"/>
    </location>
</feature>
<feature type="disulfide bond" evidence="2">
    <location>
        <begin position="68"/>
        <end position="77"/>
    </location>
</feature>
<organism>
    <name type="scientific">Conus arenatus</name>
    <name type="common">Sand-dusted cone</name>
    <dbReference type="NCBI Taxonomy" id="89451"/>
    <lineage>
        <taxon>Eukaryota</taxon>
        <taxon>Metazoa</taxon>
        <taxon>Spiralia</taxon>
        <taxon>Lophotrochozoa</taxon>
        <taxon>Mollusca</taxon>
        <taxon>Gastropoda</taxon>
        <taxon>Caenogastropoda</taxon>
        <taxon>Neogastropoda</taxon>
        <taxon>Conoidea</taxon>
        <taxon>Conidae</taxon>
        <taxon>Conus</taxon>
    </lineage>
</organism>
<accession>Q9BH84</accession>
<protein>
    <recommendedName>
        <fullName>Omega-conotoxin-like ArMKLT1-011</fullName>
    </recommendedName>
    <alternativeName>
        <fullName>Conotoxin ArMKLT1-0131</fullName>
    </alternativeName>
</protein>
<keyword id="KW-0108">Calcium channel impairing toxin</keyword>
<keyword id="KW-0165">Cleavage on pair of basic residues</keyword>
<keyword id="KW-1015">Disulfide bond</keyword>
<keyword id="KW-0872">Ion channel impairing toxin</keyword>
<keyword id="KW-0960">Knottin</keyword>
<keyword id="KW-0528">Neurotoxin</keyword>
<keyword id="KW-0638">Presynaptic neurotoxin</keyword>
<keyword id="KW-0964">Secreted</keyword>
<keyword id="KW-0732">Signal</keyword>
<keyword id="KW-0800">Toxin</keyword>
<keyword id="KW-1218">Voltage-gated calcium channel impairing toxin</keyword>
<name>O162_CONAE</name>
<proteinExistence type="evidence at transcript level"/>